<reference key="1">
    <citation type="journal article" date="2000" name="Nature">
        <title>Complete genome sequence of Pseudomonas aeruginosa PAO1, an opportunistic pathogen.</title>
        <authorList>
            <person name="Stover C.K."/>
            <person name="Pham X.-Q.T."/>
            <person name="Erwin A.L."/>
            <person name="Mizoguchi S.D."/>
            <person name="Warrener P."/>
            <person name="Hickey M.J."/>
            <person name="Brinkman F.S.L."/>
            <person name="Hufnagle W.O."/>
            <person name="Kowalik D.J."/>
            <person name="Lagrou M."/>
            <person name="Garber R.L."/>
            <person name="Goltry L."/>
            <person name="Tolentino E."/>
            <person name="Westbrock-Wadman S."/>
            <person name="Yuan Y."/>
            <person name="Brody L.L."/>
            <person name="Coulter S.N."/>
            <person name="Folger K.R."/>
            <person name="Kas A."/>
            <person name="Larbig K."/>
            <person name="Lim R.M."/>
            <person name="Smith K.A."/>
            <person name="Spencer D.H."/>
            <person name="Wong G.K.-S."/>
            <person name="Wu Z."/>
            <person name="Paulsen I.T."/>
            <person name="Reizer J."/>
            <person name="Saier M.H. Jr."/>
            <person name="Hancock R.E.W."/>
            <person name="Lory S."/>
            <person name="Olson M.V."/>
        </authorList>
    </citation>
    <scope>NUCLEOTIDE SEQUENCE [LARGE SCALE GENOMIC DNA]</scope>
    <source>
        <strain>ATCC 15692 / DSM 22644 / CIP 104116 / JCM 14847 / LMG 12228 / 1C / PRS 101 / PAO1</strain>
    </source>
</reference>
<proteinExistence type="inferred from homology"/>
<comment type="function">
    <text evidence="1">NQR complex catalyzes the reduction of ubiquinone-1 to ubiquinol by two successive reactions, coupled with the transport of Na(+) ions from the cytoplasm to the periplasm. NqrA to NqrE are probably involved in the second step, the conversion of ubisemiquinone to ubiquinol.</text>
</comment>
<comment type="catalytic activity">
    <reaction evidence="1">
        <text>a ubiquinone + n Na(+)(in) + NADH + H(+) = a ubiquinol + n Na(+)(out) + NAD(+)</text>
        <dbReference type="Rhea" id="RHEA:47748"/>
        <dbReference type="Rhea" id="RHEA-COMP:9565"/>
        <dbReference type="Rhea" id="RHEA-COMP:9566"/>
        <dbReference type="ChEBI" id="CHEBI:15378"/>
        <dbReference type="ChEBI" id="CHEBI:16389"/>
        <dbReference type="ChEBI" id="CHEBI:17976"/>
        <dbReference type="ChEBI" id="CHEBI:29101"/>
        <dbReference type="ChEBI" id="CHEBI:57540"/>
        <dbReference type="ChEBI" id="CHEBI:57945"/>
        <dbReference type="EC" id="7.2.1.1"/>
    </reaction>
</comment>
<comment type="cofactor">
    <cofactor evidence="1">
        <name>FMN</name>
        <dbReference type="ChEBI" id="CHEBI:58210"/>
    </cofactor>
</comment>
<comment type="subunit">
    <text evidence="1">Composed of six subunits; NqrA, NqrB, NqrC, NqrD, NqrE and NqrF.</text>
</comment>
<comment type="subcellular location">
    <subcellularLocation>
        <location evidence="1">Cell inner membrane</location>
        <topology evidence="1">Multi-pass membrane protein</topology>
    </subcellularLocation>
</comment>
<comment type="similarity">
    <text evidence="1">Belongs to the NqrB/RnfD family.</text>
</comment>
<gene>
    <name evidence="1" type="primary">nqrB</name>
    <name type="ordered locus">PA2998</name>
</gene>
<name>NQRB_PSEAE</name>
<protein>
    <recommendedName>
        <fullName evidence="1">Na(+)-translocating NADH-quinone reductase subunit B</fullName>
        <shortName evidence="1">Na(+)-NQR subunit B</shortName>
        <shortName evidence="1">Na(+)-translocating NQR subunit B</shortName>
        <ecNumber evidence="1">7.2.1.1</ecNumber>
    </recommendedName>
    <alternativeName>
        <fullName evidence="1">NQR complex subunit B</fullName>
    </alternativeName>
    <alternativeName>
        <fullName evidence="1">NQR-1 subunit B</fullName>
    </alternativeName>
</protein>
<sequence length="403" mass="44069">MGLRNLLDKVEHHFEKGGRYEKWYPLYEAVDTFLYRPGSVTRTTAHVRDGIDLKRMMIIVWLCTFPAMFFGMYNVGHQANLIFAQSPDLLSAQDGWRFALIGALAGFDPNSLWDCLVQGAAYFLPVYLTTFIVGGFWEVLFASIRRHEVNEGFFVTSVLFALTLPPSVPLWQVALGISFGVVLGKEVFGGTGKNFLNPALVGRAFLFFAYPAQMSGDAVWTSVDGFAGATSLSLAAAGGVDNILGHGLTWMDAFLGHMQGSMGETSTLAIFIGGAVLLLTRIASWRIVAGVMLGMVAMSYLFNAIGSASNPMFAMPWYWHLVTGGFAFGMIFMATDPVSASMTDTGKWLFGALIGVMVMLIRVVNPAFPEGMMLAILFANLFAPLIDHFVVQANIKRRLARNG</sequence>
<accession>Q9HZK7</accession>
<keyword id="KW-0997">Cell inner membrane</keyword>
<keyword id="KW-1003">Cell membrane</keyword>
<keyword id="KW-0285">Flavoprotein</keyword>
<keyword id="KW-0288">FMN</keyword>
<keyword id="KW-0406">Ion transport</keyword>
<keyword id="KW-0472">Membrane</keyword>
<keyword id="KW-0520">NAD</keyword>
<keyword id="KW-0597">Phosphoprotein</keyword>
<keyword id="KW-1185">Reference proteome</keyword>
<keyword id="KW-0915">Sodium</keyword>
<keyword id="KW-0739">Sodium transport</keyword>
<keyword id="KW-1278">Translocase</keyword>
<keyword id="KW-0812">Transmembrane</keyword>
<keyword id="KW-1133">Transmembrane helix</keyword>
<keyword id="KW-0813">Transport</keyword>
<keyword id="KW-0830">Ubiquinone</keyword>
<organism>
    <name type="scientific">Pseudomonas aeruginosa (strain ATCC 15692 / DSM 22644 / CIP 104116 / JCM 14847 / LMG 12228 / 1C / PRS 101 / PAO1)</name>
    <dbReference type="NCBI Taxonomy" id="208964"/>
    <lineage>
        <taxon>Bacteria</taxon>
        <taxon>Pseudomonadati</taxon>
        <taxon>Pseudomonadota</taxon>
        <taxon>Gammaproteobacteria</taxon>
        <taxon>Pseudomonadales</taxon>
        <taxon>Pseudomonadaceae</taxon>
        <taxon>Pseudomonas</taxon>
    </lineage>
</organism>
<feature type="chain" id="PRO_0000074441" description="Na(+)-translocating NADH-quinone reductase subunit B">
    <location>
        <begin position="1"/>
        <end position="403"/>
    </location>
</feature>
<feature type="transmembrane region" description="Helical" evidence="1">
    <location>
        <begin position="56"/>
        <end position="76"/>
    </location>
</feature>
<feature type="transmembrane region" description="Helical" evidence="1">
    <location>
        <begin position="121"/>
        <end position="141"/>
    </location>
</feature>
<feature type="transmembrane region" description="Helical" evidence="1">
    <location>
        <begin position="164"/>
        <end position="184"/>
    </location>
</feature>
<feature type="transmembrane region" description="Helical" evidence="1">
    <location>
        <begin position="225"/>
        <end position="245"/>
    </location>
</feature>
<feature type="transmembrane region" description="Helical" evidence="1">
    <location>
        <begin position="260"/>
        <end position="280"/>
    </location>
</feature>
<feature type="transmembrane region" description="Helical" evidence="1">
    <location>
        <begin position="287"/>
        <end position="307"/>
    </location>
</feature>
<feature type="transmembrane region" description="Helical" evidence="1">
    <location>
        <begin position="312"/>
        <end position="332"/>
    </location>
</feature>
<feature type="transmembrane region" description="Helical" evidence="1">
    <location>
        <begin position="348"/>
        <end position="368"/>
    </location>
</feature>
<feature type="transmembrane region" description="Helical" evidence="1">
    <location>
        <begin position="371"/>
        <end position="391"/>
    </location>
</feature>
<feature type="modified residue" description="FMN phosphoryl threonine" evidence="1">
    <location>
        <position position="230"/>
    </location>
</feature>
<evidence type="ECO:0000255" key="1">
    <source>
        <dbReference type="HAMAP-Rule" id="MF_00426"/>
    </source>
</evidence>
<dbReference type="EC" id="7.2.1.1" evidence="1"/>
<dbReference type="EMBL" id="AE004091">
    <property type="protein sequence ID" value="AAG06386.1"/>
    <property type="molecule type" value="Genomic_DNA"/>
</dbReference>
<dbReference type="PIR" id="G83272">
    <property type="entry name" value="G83272"/>
</dbReference>
<dbReference type="RefSeq" id="NP_251688.1">
    <property type="nucleotide sequence ID" value="NC_002516.2"/>
</dbReference>
<dbReference type="RefSeq" id="WP_003109478.1">
    <property type="nucleotide sequence ID" value="NZ_QZGE01000009.1"/>
</dbReference>
<dbReference type="SMR" id="Q9HZK7"/>
<dbReference type="STRING" id="208964.PA2998"/>
<dbReference type="PaxDb" id="208964-PA2998"/>
<dbReference type="DNASU" id="880205"/>
<dbReference type="GeneID" id="880205"/>
<dbReference type="KEGG" id="pae:PA2998"/>
<dbReference type="PATRIC" id="fig|208964.12.peg.3146"/>
<dbReference type="PseudoCAP" id="PA2998"/>
<dbReference type="HOGENOM" id="CLU_042020_1_1_6"/>
<dbReference type="InParanoid" id="Q9HZK7"/>
<dbReference type="OrthoDB" id="9776359at2"/>
<dbReference type="PhylomeDB" id="Q9HZK7"/>
<dbReference type="BioCyc" id="PAER208964:G1FZ6-3050-MONOMER"/>
<dbReference type="PHI-base" id="PHI:8944"/>
<dbReference type="Proteomes" id="UP000002438">
    <property type="component" value="Chromosome"/>
</dbReference>
<dbReference type="GO" id="GO:0005886">
    <property type="term" value="C:plasma membrane"/>
    <property type="evidence" value="ECO:0000318"/>
    <property type="project" value="GO_Central"/>
</dbReference>
<dbReference type="GO" id="GO:0010181">
    <property type="term" value="F:FMN binding"/>
    <property type="evidence" value="ECO:0007669"/>
    <property type="project" value="InterPro"/>
</dbReference>
<dbReference type="GO" id="GO:0016655">
    <property type="term" value="F:oxidoreductase activity, acting on NAD(P)H, quinone or similar compound as acceptor"/>
    <property type="evidence" value="ECO:0007669"/>
    <property type="project" value="UniProtKB-UniRule"/>
</dbReference>
<dbReference type="GO" id="GO:0022904">
    <property type="term" value="P:respiratory electron transport chain"/>
    <property type="evidence" value="ECO:0007669"/>
    <property type="project" value="InterPro"/>
</dbReference>
<dbReference type="GO" id="GO:0006814">
    <property type="term" value="P:sodium ion transport"/>
    <property type="evidence" value="ECO:0007669"/>
    <property type="project" value="UniProtKB-UniRule"/>
</dbReference>
<dbReference type="GO" id="GO:0055085">
    <property type="term" value="P:transmembrane transport"/>
    <property type="evidence" value="ECO:0007669"/>
    <property type="project" value="InterPro"/>
</dbReference>
<dbReference type="HAMAP" id="MF_00426">
    <property type="entry name" value="NqrB"/>
    <property type="match status" value="1"/>
</dbReference>
<dbReference type="InterPro" id="IPR010966">
    <property type="entry name" value="NqrB"/>
</dbReference>
<dbReference type="InterPro" id="IPR004338">
    <property type="entry name" value="NqrB/RnfD"/>
</dbReference>
<dbReference type="NCBIfam" id="TIGR01937">
    <property type="entry name" value="nqrB"/>
    <property type="match status" value="1"/>
</dbReference>
<dbReference type="NCBIfam" id="NF003756">
    <property type="entry name" value="PRK05349.1"/>
    <property type="match status" value="1"/>
</dbReference>
<dbReference type="PANTHER" id="PTHR30578">
    <property type="entry name" value="ELECTRON TRANSPORT COMPLEX PROTEIN RNFD"/>
    <property type="match status" value="1"/>
</dbReference>
<dbReference type="PANTHER" id="PTHR30578:SF1">
    <property type="entry name" value="NA(+)-TRANSLOCATING NADH-QUINONE REDUCTASE SUBUNIT B"/>
    <property type="match status" value="1"/>
</dbReference>
<dbReference type="Pfam" id="PF03116">
    <property type="entry name" value="NQR2_RnfD_RnfE"/>
    <property type="match status" value="1"/>
</dbReference>
<dbReference type="PIRSF" id="PIRSF016055">
    <property type="entry name" value="NADH-UbQ_OxRdtase_B_su"/>
    <property type="match status" value="1"/>
</dbReference>